<proteinExistence type="inferred from homology"/>
<gene>
    <name evidence="1" type="primary">atpA</name>
</gene>
<sequence>MVNIRPEEISSVIFRQIEQYNQEVRVFNIGTVLQVGDGIARIYGLNEVMAGELVEFEDGTVGIALNLESNNVGAVLMGDGLTIQEGSSVKATGKIAQIPVSDAYLGRVVNALAQPIDGKGQIPASESRLIESPAPGIISRRSAYEPMQTGLIAIDSMIPIGRGQRELIIGDRQTGKTAVATDTILNQKGQNVICVYVAIGQKASSVAQVVNTFEEQGAMEYTIVVAETANSPATLQYLAPYTGAALAEYFMYRQQHTLIIYDDLSKQAQAYRQMSLLLRRPPGREAYPGDVFYLHSRLLERAAKLSSQLGEGSMTALPVVETQAGDVSAYIPTNVISITDGQTFLSADSSNAGIRPAINVGISVSRVGSAAQIKAMKQVAGKLKLELAQFAELEAFAQFASDLDKATQNQLARGQRLRELLKQSQSAPLTVEEQVATIYTGVNGYSDILEIGQVKKFLVQFREYLITNKPKFAEIICSTKVFTEQAEIILKEAIEEHTELFLLQEQK</sequence>
<protein>
    <recommendedName>
        <fullName evidence="1">ATP synthase subunit alpha, chloroplastic</fullName>
        <ecNumber evidence="1">7.1.2.2</ecNumber>
    </recommendedName>
    <alternativeName>
        <fullName evidence="1">ATP synthase F1 sector subunit alpha</fullName>
    </alternativeName>
    <alternativeName>
        <fullName evidence="1">F-ATPase subunit alpha</fullName>
    </alternativeName>
</protein>
<geneLocation type="chloroplast"/>
<evidence type="ECO:0000255" key="1">
    <source>
        <dbReference type="HAMAP-Rule" id="MF_01346"/>
    </source>
</evidence>
<dbReference type="EC" id="7.1.2.2" evidence="1"/>
<dbReference type="EMBL" id="AY660566">
    <property type="protein sequence ID" value="AAT80740.1"/>
    <property type="molecule type" value="Genomic_DNA"/>
</dbReference>
<dbReference type="RefSeq" id="YP_209544.1">
    <property type="nucleotide sequence ID" value="NC_006861.1"/>
</dbReference>
<dbReference type="SMR" id="Q5SCX6"/>
<dbReference type="GeneID" id="3283723"/>
<dbReference type="GO" id="GO:0009535">
    <property type="term" value="C:chloroplast thylakoid membrane"/>
    <property type="evidence" value="ECO:0007669"/>
    <property type="project" value="UniProtKB-SubCell"/>
</dbReference>
<dbReference type="GO" id="GO:0045259">
    <property type="term" value="C:proton-transporting ATP synthase complex"/>
    <property type="evidence" value="ECO:0007669"/>
    <property type="project" value="UniProtKB-KW"/>
</dbReference>
<dbReference type="GO" id="GO:0043531">
    <property type="term" value="F:ADP binding"/>
    <property type="evidence" value="ECO:0007669"/>
    <property type="project" value="TreeGrafter"/>
</dbReference>
<dbReference type="GO" id="GO:0005524">
    <property type="term" value="F:ATP binding"/>
    <property type="evidence" value="ECO:0007669"/>
    <property type="project" value="UniProtKB-UniRule"/>
</dbReference>
<dbReference type="GO" id="GO:0046933">
    <property type="term" value="F:proton-transporting ATP synthase activity, rotational mechanism"/>
    <property type="evidence" value="ECO:0007669"/>
    <property type="project" value="UniProtKB-UniRule"/>
</dbReference>
<dbReference type="CDD" id="cd18113">
    <property type="entry name" value="ATP-synt_F1_alpha_C"/>
    <property type="match status" value="1"/>
</dbReference>
<dbReference type="CDD" id="cd18116">
    <property type="entry name" value="ATP-synt_F1_alpha_N"/>
    <property type="match status" value="1"/>
</dbReference>
<dbReference type="CDD" id="cd01132">
    <property type="entry name" value="F1-ATPase_alpha_CD"/>
    <property type="match status" value="1"/>
</dbReference>
<dbReference type="FunFam" id="1.20.150.20:FF:000001">
    <property type="entry name" value="ATP synthase subunit alpha"/>
    <property type="match status" value="1"/>
</dbReference>
<dbReference type="FunFam" id="2.40.30.20:FF:000001">
    <property type="entry name" value="ATP synthase subunit alpha"/>
    <property type="match status" value="1"/>
</dbReference>
<dbReference type="FunFam" id="3.40.50.300:FF:000002">
    <property type="entry name" value="ATP synthase subunit alpha"/>
    <property type="match status" value="1"/>
</dbReference>
<dbReference type="Gene3D" id="2.40.30.20">
    <property type="match status" value="1"/>
</dbReference>
<dbReference type="Gene3D" id="1.20.150.20">
    <property type="entry name" value="ATP synthase alpha/beta chain, C-terminal domain"/>
    <property type="match status" value="1"/>
</dbReference>
<dbReference type="Gene3D" id="3.40.50.300">
    <property type="entry name" value="P-loop containing nucleotide triphosphate hydrolases"/>
    <property type="match status" value="1"/>
</dbReference>
<dbReference type="HAMAP" id="MF_01346">
    <property type="entry name" value="ATP_synth_alpha_bact"/>
    <property type="match status" value="1"/>
</dbReference>
<dbReference type="InterPro" id="IPR023366">
    <property type="entry name" value="ATP_synth_asu-like_sf"/>
</dbReference>
<dbReference type="InterPro" id="IPR000793">
    <property type="entry name" value="ATP_synth_asu_C"/>
</dbReference>
<dbReference type="InterPro" id="IPR038376">
    <property type="entry name" value="ATP_synth_asu_C_sf"/>
</dbReference>
<dbReference type="InterPro" id="IPR033732">
    <property type="entry name" value="ATP_synth_F1_a_nt-bd_dom"/>
</dbReference>
<dbReference type="InterPro" id="IPR005294">
    <property type="entry name" value="ATP_synth_F1_asu"/>
</dbReference>
<dbReference type="InterPro" id="IPR020003">
    <property type="entry name" value="ATPase_a/bsu_AS"/>
</dbReference>
<dbReference type="InterPro" id="IPR004100">
    <property type="entry name" value="ATPase_F1/V1/A1_a/bsu_N"/>
</dbReference>
<dbReference type="InterPro" id="IPR036121">
    <property type="entry name" value="ATPase_F1/V1/A1_a/bsu_N_sf"/>
</dbReference>
<dbReference type="InterPro" id="IPR000194">
    <property type="entry name" value="ATPase_F1/V1/A1_a/bsu_nucl-bd"/>
</dbReference>
<dbReference type="InterPro" id="IPR027417">
    <property type="entry name" value="P-loop_NTPase"/>
</dbReference>
<dbReference type="NCBIfam" id="TIGR00962">
    <property type="entry name" value="atpA"/>
    <property type="match status" value="1"/>
</dbReference>
<dbReference type="NCBIfam" id="NF009884">
    <property type="entry name" value="PRK13343.1"/>
    <property type="match status" value="1"/>
</dbReference>
<dbReference type="PANTHER" id="PTHR48082">
    <property type="entry name" value="ATP SYNTHASE SUBUNIT ALPHA, MITOCHONDRIAL"/>
    <property type="match status" value="1"/>
</dbReference>
<dbReference type="PANTHER" id="PTHR48082:SF2">
    <property type="entry name" value="ATP SYNTHASE SUBUNIT ALPHA, MITOCHONDRIAL"/>
    <property type="match status" value="1"/>
</dbReference>
<dbReference type="Pfam" id="PF00006">
    <property type="entry name" value="ATP-synt_ab"/>
    <property type="match status" value="1"/>
</dbReference>
<dbReference type="Pfam" id="PF00306">
    <property type="entry name" value="ATP-synt_ab_C"/>
    <property type="match status" value="1"/>
</dbReference>
<dbReference type="Pfam" id="PF02874">
    <property type="entry name" value="ATP-synt_ab_N"/>
    <property type="match status" value="1"/>
</dbReference>
<dbReference type="PIRSF" id="PIRSF039088">
    <property type="entry name" value="F_ATPase_subunit_alpha"/>
    <property type="match status" value="1"/>
</dbReference>
<dbReference type="SUPFAM" id="SSF47917">
    <property type="entry name" value="C-terminal domain of alpha and beta subunits of F1 ATP synthase"/>
    <property type="match status" value="1"/>
</dbReference>
<dbReference type="SUPFAM" id="SSF50615">
    <property type="entry name" value="N-terminal domain of alpha and beta subunits of F1 ATP synthase"/>
    <property type="match status" value="1"/>
</dbReference>
<dbReference type="SUPFAM" id="SSF52540">
    <property type="entry name" value="P-loop containing nucleoside triphosphate hydrolases"/>
    <property type="match status" value="1"/>
</dbReference>
<dbReference type="PROSITE" id="PS00152">
    <property type="entry name" value="ATPASE_ALPHA_BETA"/>
    <property type="match status" value="1"/>
</dbReference>
<organism>
    <name type="scientific">Huperzia lucidula</name>
    <name type="common">Shining clubmoss</name>
    <name type="synonym">Lycopodium lucidulum</name>
    <dbReference type="NCBI Taxonomy" id="37429"/>
    <lineage>
        <taxon>Eukaryota</taxon>
        <taxon>Viridiplantae</taxon>
        <taxon>Streptophyta</taxon>
        <taxon>Embryophyta</taxon>
        <taxon>Tracheophyta</taxon>
        <taxon>Lycopodiopsida</taxon>
        <taxon>Lycopodiales</taxon>
        <taxon>Lycopodiaceae</taxon>
        <taxon>Huperzioideae</taxon>
        <taxon>Huperzia</taxon>
    </lineage>
</organism>
<feature type="chain" id="PRO_0000238424" description="ATP synthase subunit alpha, chloroplastic">
    <location>
        <begin position="1"/>
        <end position="507"/>
    </location>
</feature>
<feature type="binding site" evidence="1">
    <location>
        <begin position="170"/>
        <end position="177"/>
    </location>
    <ligand>
        <name>ATP</name>
        <dbReference type="ChEBI" id="CHEBI:30616"/>
    </ligand>
</feature>
<feature type="site" description="Required for activity" evidence="1">
    <location>
        <position position="363"/>
    </location>
</feature>
<comment type="function">
    <text evidence="1">Produces ATP from ADP in the presence of a proton gradient across the membrane. The alpha chain is a regulatory subunit.</text>
</comment>
<comment type="catalytic activity">
    <reaction evidence="1">
        <text>ATP + H2O + 4 H(+)(in) = ADP + phosphate + 5 H(+)(out)</text>
        <dbReference type="Rhea" id="RHEA:57720"/>
        <dbReference type="ChEBI" id="CHEBI:15377"/>
        <dbReference type="ChEBI" id="CHEBI:15378"/>
        <dbReference type="ChEBI" id="CHEBI:30616"/>
        <dbReference type="ChEBI" id="CHEBI:43474"/>
        <dbReference type="ChEBI" id="CHEBI:456216"/>
        <dbReference type="EC" id="7.1.2.2"/>
    </reaction>
</comment>
<comment type="subunit">
    <text evidence="1">F-type ATPases have 2 components, CF(1) - the catalytic core - and CF(0) - the membrane proton channel. CF(1) has five subunits: alpha(3), beta(3), gamma(1), delta(1), epsilon(1). CF(0) has four main subunits: a, b, b' and c.</text>
</comment>
<comment type="subcellular location">
    <subcellularLocation>
        <location evidence="1">Plastid</location>
        <location evidence="1">Chloroplast thylakoid membrane</location>
        <topology evidence="1">Peripheral membrane protein</topology>
    </subcellularLocation>
</comment>
<comment type="similarity">
    <text evidence="1">Belongs to the ATPase alpha/beta chains family.</text>
</comment>
<keyword id="KW-0066">ATP synthesis</keyword>
<keyword id="KW-0067">ATP-binding</keyword>
<keyword id="KW-0139">CF(1)</keyword>
<keyword id="KW-0150">Chloroplast</keyword>
<keyword id="KW-0375">Hydrogen ion transport</keyword>
<keyword id="KW-0406">Ion transport</keyword>
<keyword id="KW-0472">Membrane</keyword>
<keyword id="KW-0547">Nucleotide-binding</keyword>
<keyword id="KW-0934">Plastid</keyword>
<keyword id="KW-0793">Thylakoid</keyword>
<keyword id="KW-1278">Translocase</keyword>
<keyword id="KW-0813">Transport</keyword>
<name>ATPA_HUPLU</name>
<reference key="1">
    <citation type="journal article" date="2005" name="Gene">
        <title>The first complete chloroplast genome sequence of a lycophyte, Huperzia lucidula (Lycopodiaceae).</title>
        <authorList>
            <person name="Wolf P.G."/>
            <person name="Karol K.G."/>
            <person name="Mandoli D.F."/>
            <person name="Kuehl J.V."/>
            <person name="Arumuganathan K."/>
            <person name="Ellis M.W."/>
            <person name="Mishler B.D."/>
            <person name="Kelch D.G."/>
            <person name="Olmstead R.G."/>
            <person name="Boore J.L."/>
        </authorList>
    </citation>
    <scope>NUCLEOTIDE SEQUENCE [LARGE SCALE GENOMIC DNA]</scope>
</reference>
<accession>Q5SCX6</accession>